<keyword id="KW-0687">Ribonucleoprotein</keyword>
<keyword id="KW-0689">Ribosomal protein</keyword>
<keyword id="KW-0694">RNA-binding</keyword>
<keyword id="KW-0699">rRNA-binding</keyword>
<organism>
    <name type="scientific">Bacillus velezensis (strain DSM 23117 / BGSC 10A6 / LMG 26770 / FZB42)</name>
    <name type="common">Bacillus amyloliquefaciens subsp. plantarum</name>
    <dbReference type="NCBI Taxonomy" id="326423"/>
    <lineage>
        <taxon>Bacteria</taxon>
        <taxon>Bacillati</taxon>
        <taxon>Bacillota</taxon>
        <taxon>Bacilli</taxon>
        <taxon>Bacillales</taxon>
        <taxon>Bacillaceae</taxon>
        <taxon>Bacillus</taxon>
        <taxon>Bacillus amyloliquefaciens group</taxon>
    </lineage>
</organism>
<protein>
    <recommendedName>
        <fullName evidence="1">Large ribosomal subunit protein bL20</fullName>
    </recommendedName>
    <alternativeName>
        <fullName evidence="2">50S ribosomal protein L20</fullName>
    </alternativeName>
</protein>
<accession>A7Z7H3</accession>
<gene>
    <name evidence="1" type="primary">rplT</name>
    <name type="ordered locus">RBAM_025910</name>
</gene>
<comment type="function">
    <text evidence="1">Binds directly to 23S ribosomal RNA and is necessary for the in vitro assembly process of the 50S ribosomal subunit. It is not involved in the protein synthesizing functions of that subunit.</text>
</comment>
<comment type="similarity">
    <text evidence="1">Belongs to the bacterial ribosomal protein bL20 family.</text>
</comment>
<proteinExistence type="inferred from homology"/>
<feature type="chain" id="PRO_1000048926" description="Large ribosomal subunit protein bL20">
    <location>
        <begin position="1"/>
        <end position="119"/>
    </location>
</feature>
<name>RL20_BACVZ</name>
<evidence type="ECO:0000255" key="1">
    <source>
        <dbReference type="HAMAP-Rule" id="MF_00382"/>
    </source>
</evidence>
<evidence type="ECO:0000305" key="2"/>
<dbReference type="EMBL" id="CP000560">
    <property type="protein sequence ID" value="ABS74949.1"/>
    <property type="molecule type" value="Genomic_DNA"/>
</dbReference>
<dbReference type="RefSeq" id="WP_007613019.1">
    <property type="nucleotide sequence ID" value="NC_009725.2"/>
</dbReference>
<dbReference type="SMR" id="A7Z7H3"/>
<dbReference type="GeneID" id="93081733"/>
<dbReference type="KEGG" id="bay:RBAM_025910"/>
<dbReference type="HOGENOM" id="CLU_123265_0_1_9"/>
<dbReference type="Proteomes" id="UP000001120">
    <property type="component" value="Chromosome"/>
</dbReference>
<dbReference type="GO" id="GO:1990904">
    <property type="term" value="C:ribonucleoprotein complex"/>
    <property type="evidence" value="ECO:0007669"/>
    <property type="project" value="UniProtKB-KW"/>
</dbReference>
<dbReference type="GO" id="GO:0005840">
    <property type="term" value="C:ribosome"/>
    <property type="evidence" value="ECO:0007669"/>
    <property type="project" value="UniProtKB-KW"/>
</dbReference>
<dbReference type="GO" id="GO:0019843">
    <property type="term" value="F:rRNA binding"/>
    <property type="evidence" value="ECO:0007669"/>
    <property type="project" value="UniProtKB-UniRule"/>
</dbReference>
<dbReference type="GO" id="GO:0003735">
    <property type="term" value="F:structural constituent of ribosome"/>
    <property type="evidence" value="ECO:0007669"/>
    <property type="project" value="InterPro"/>
</dbReference>
<dbReference type="GO" id="GO:0000027">
    <property type="term" value="P:ribosomal large subunit assembly"/>
    <property type="evidence" value="ECO:0007669"/>
    <property type="project" value="UniProtKB-UniRule"/>
</dbReference>
<dbReference type="GO" id="GO:0006412">
    <property type="term" value="P:translation"/>
    <property type="evidence" value="ECO:0007669"/>
    <property type="project" value="InterPro"/>
</dbReference>
<dbReference type="CDD" id="cd07026">
    <property type="entry name" value="Ribosomal_L20"/>
    <property type="match status" value="1"/>
</dbReference>
<dbReference type="FunFam" id="1.10.1900.20:FF:000001">
    <property type="entry name" value="50S ribosomal protein L20"/>
    <property type="match status" value="1"/>
</dbReference>
<dbReference type="Gene3D" id="6.10.160.10">
    <property type="match status" value="1"/>
</dbReference>
<dbReference type="Gene3D" id="1.10.1900.20">
    <property type="entry name" value="Ribosomal protein L20"/>
    <property type="match status" value="1"/>
</dbReference>
<dbReference type="HAMAP" id="MF_00382">
    <property type="entry name" value="Ribosomal_bL20"/>
    <property type="match status" value="1"/>
</dbReference>
<dbReference type="InterPro" id="IPR005813">
    <property type="entry name" value="Ribosomal_bL20"/>
</dbReference>
<dbReference type="InterPro" id="IPR049946">
    <property type="entry name" value="RIBOSOMAL_L20_CS"/>
</dbReference>
<dbReference type="InterPro" id="IPR035566">
    <property type="entry name" value="Ribosomal_protein_bL20_C"/>
</dbReference>
<dbReference type="NCBIfam" id="TIGR01032">
    <property type="entry name" value="rplT_bact"/>
    <property type="match status" value="1"/>
</dbReference>
<dbReference type="PANTHER" id="PTHR10986">
    <property type="entry name" value="39S RIBOSOMAL PROTEIN L20"/>
    <property type="match status" value="1"/>
</dbReference>
<dbReference type="Pfam" id="PF00453">
    <property type="entry name" value="Ribosomal_L20"/>
    <property type="match status" value="1"/>
</dbReference>
<dbReference type="PRINTS" id="PR00062">
    <property type="entry name" value="RIBOSOMALL20"/>
</dbReference>
<dbReference type="SUPFAM" id="SSF74731">
    <property type="entry name" value="Ribosomal protein L20"/>
    <property type="match status" value="1"/>
</dbReference>
<dbReference type="PROSITE" id="PS00937">
    <property type="entry name" value="RIBOSOMAL_L20"/>
    <property type="match status" value="1"/>
</dbReference>
<reference key="1">
    <citation type="journal article" date="2007" name="Nat. Biotechnol.">
        <title>Comparative analysis of the complete genome sequence of the plant growth-promoting bacterium Bacillus amyloliquefaciens FZB42.</title>
        <authorList>
            <person name="Chen X.H."/>
            <person name="Koumoutsi A."/>
            <person name="Scholz R."/>
            <person name="Eisenreich A."/>
            <person name="Schneider K."/>
            <person name="Heinemeyer I."/>
            <person name="Morgenstern B."/>
            <person name="Voss B."/>
            <person name="Hess W.R."/>
            <person name="Reva O."/>
            <person name="Junge H."/>
            <person name="Voigt B."/>
            <person name="Jungblut P.R."/>
            <person name="Vater J."/>
            <person name="Suessmuth R."/>
            <person name="Liesegang H."/>
            <person name="Strittmatter A."/>
            <person name="Gottschalk G."/>
            <person name="Borriss R."/>
        </authorList>
    </citation>
    <scope>NUCLEOTIDE SEQUENCE [LARGE SCALE GENOMIC DNA]</scope>
    <source>
        <strain>DSM 23117 / BGSC 10A6 / LMG 26770 / FZB42</strain>
    </source>
</reference>
<sequence length="119" mass="13680">MPRVKGGTVSRQRRKKVLKLAKGYFGSKHRLYKVANQQVMKSGNYAFRDRRQKKRDFRKLWITRINAAARMNGLSYSRLMHGLKLSGIEVNRKMLADLAVNDLTAFNQLADAAKAQLDK</sequence>